<dbReference type="EC" id="3.2.2.23" evidence="2"/>
<dbReference type="EC" id="4.2.99.18" evidence="2"/>
<dbReference type="EMBL" id="CP000800">
    <property type="protein sequence ID" value="ABV20030.1"/>
    <property type="molecule type" value="Genomic_DNA"/>
</dbReference>
<dbReference type="RefSeq" id="WP_001114533.1">
    <property type="nucleotide sequence ID" value="NC_009801.1"/>
</dbReference>
<dbReference type="SMR" id="A7ZTI6"/>
<dbReference type="GeneID" id="93778348"/>
<dbReference type="KEGG" id="ecw:EcE24377A_4136"/>
<dbReference type="HOGENOM" id="CLU_038423_1_1_6"/>
<dbReference type="Proteomes" id="UP000001122">
    <property type="component" value="Chromosome"/>
</dbReference>
<dbReference type="GO" id="GO:0034039">
    <property type="term" value="F:8-oxo-7,8-dihydroguanine DNA N-glycosylase activity"/>
    <property type="evidence" value="ECO:0007669"/>
    <property type="project" value="TreeGrafter"/>
</dbReference>
<dbReference type="GO" id="GO:0140078">
    <property type="term" value="F:class I DNA-(apurinic or apyrimidinic site) endonuclease activity"/>
    <property type="evidence" value="ECO:0007669"/>
    <property type="project" value="UniProtKB-EC"/>
</dbReference>
<dbReference type="GO" id="GO:0003684">
    <property type="term" value="F:damaged DNA binding"/>
    <property type="evidence" value="ECO:0007669"/>
    <property type="project" value="InterPro"/>
</dbReference>
<dbReference type="GO" id="GO:0008270">
    <property type="term" value="F:zinc ion binding"/>
    <property type="evidence" value="ECO:0007669"/>
    <property type="project" value="UniProtKB-UniRule"/>
</dbReference>
<dbReference type="GO" id="GO:0006284">
    <property type="term" value="P:base-excision repair"/>
    <property type="evidence" value="ECO:0007669"/>
    <property type="project" value="InterPro"/>
</dbReference>
<dbReference type="CDD" id="cd08966">
    <property type="entry name" value="EcFpg-like_N"/>
    <property type="match status" value="1"/>
</dbReference>
<dbReference type="FunFam" id="1.10.8.50:FF:000003">
    <property type="entry name" value="Formamidopyrimidine-DNA glycosylase"/>
    <property type="match status" value="1"/>
</dbReference>
<dbReference type="FunFam" id="3.20.190.10:FF:000001">
    <property type="entry name" value="Formamidopyrimidine-DNA glycosylase"/>
    <property type="match status" value="1"/>
</dbReference>
<dbReference type="Gene3D" id="1.10.8.50">
    <property type="match status" value="1"/>
</dbReference>
<dbReference type="Gene3D" id="3.20.190.10">
    <property type="entry name" value="MutM-like, N-terminal"/>
    <property type="match status" value="1"/>
</dbReference>
<dbReference type="HAMAP" id="MF_00103">
    <property type="entry name" value="Fapy_DNA_glycosyl"/>
    <property type="match status" value="1"/>
</dbReference>
<dbReference type="InterPro" id="IPR015886">
    <property type="entry name" value="DNA_glyclase/AP_lyase_DNA-bd"/>
</dbReference>
<dbReference type="InterPro" id="IPR015887">
    <property type="entry name" value="DNA_glyclase_Znf_dom_DNA_BS"/>
</dbReference>
<dbReference type="InterPro" id="IPR020629">
    <property type="entry name" value="Formamido-pyr_DNA_Glyclase"/>
</dbReference>
<dbReference type="InterPro" id="IPR012319">
    <property type="entry name" value="FPG_cat"/>
</dbReference>
<dbReference type="InterPro" id="IPR035937">
    <property type="entry name" value="MutM-like_N-ter"/>
</dbReference>
<dbReference type="InterPro" id="IPR010979">
    <property type="entry name" value="Ribosomal_uS13-like_H2TH"/>
</dbReference>
<dbReference type="InterPro" id="IPR000214">
    <property type="entry name" value="Znf_DNA_glyclase/AP_lyase"/>
</dbReference>
<dbReference type="InterPro" id="IPR010663">
    <property type="entry name" value="Znf_FPG/IleRS"/>
</dbReference>
<dbReference type="NCBIfam" id="TIGR00577">
    <property type="entry name" value="fpg"/>
    <property type="match status" value="1"/>
</dbReference>
<dbReference type="NCBIfam" id="NF002211">
    <property type="entry name" value="PRK01103.1"/>
    <property type="match status" value="1"/>
</dbReference>
<dbReference type="PANTHER" id="PTHR22993">
    <property type="entry name" value="FORMAMIDOPYRIMIDINE-DNA GLYCOSYLASE"/>
    <property type="match status" value="1"/>
</dbReference>
<dbReference type="PANTHER" id="PTHR22993:SF9">
    <property type="entry name" value="FORMAMIDOPYRIMIDINE-DNA GLYCOSYLASE"/>
    <property type="match status" value="1"/>
</dbReference>
<dbReference type="Pfam" id="PF01149">
    <property type="entry name" value="Fapy_DNA_glyco"/>
    <property type="match status" value="1"/>
</dbReference>
<dbReference type="Pfam" id="PF06831">
    <property type="entry name" value="H2TH"/>
    <property type="match status" value="1"/>
</dbReference>
<dbReference type="Pfam" id="PF06827">
    <property type="entry name" value="zf-FPG_IleRS"/>
    <property type="match status" value="1"/>
</dbReference>
<dbReference type="SMART" id="SM00898">
    <property type="entry name" value="Fapy_DNA_glyco"/>
    <property type="match status" value="1"/>
</dbReference>
<dbReference type="SMART" id="SM01232">
    <property type="entry name" value="H2TH"/>
    <property type="match status" value="1"/>
</dbReference>
<dbReference type="SUPFAM" id="SSF57716">
    <property type="entry name" value="Glucocorticoid receptor-like (DNA-binding domain)"/>
    <property type="match status" value="1"/>
</dbReference>
<dbReference type="SUPFAM" id="SSF81624">
    <property type="entry name" value="N-terminal domain of MutM-like DNA repair proteins"/>
    <property type="match status" value="1"/>
</dbReference>
<dbReference type="SUPFAM" id="SSF46946">
    <property type="entry name" value="S13-like H2TH domain"/>
    <property type="match status" value="1"/>
</dbReference>
<dbReference type="PROSITE" id="PS51068">
    <property type="entry name" value="FPG_CAT"/>
    <property type="match status" value="1"/>
</dbReference>
<dbReference type="PROSITE" id="PS01242">
    <property type="entry name" value="ZF_FPG_1"/>
    <property type="match status" value="1"/>
</dbReference>
<dbReference type="PROSITE" id="PS51066">
    <property type="entry name" value="ZF_FPG_2"/>
    <property type="match status" value="1"/>
</dbReference>
<evidence type="ECO:0000250" key="1"/>
<evidence type="ECO:0000255" key="2">
    <source>
        <dbReference type="HAMAP-Rule" id="MF_00103"/>
    </source>
</evidence>
<comment type="function">
    <text evidence="2">Involved in base excision repair of DNA damaged by oxidation or by mutagenic agents. Acts as a DNA glycosylase that recognizes and removes damaged bases. Has a preference for oxidized purines, such as 7,8-dihydro-8-oxoguanine (8-oxoG). Has AP (apurinic/apyrimidinic) lyase activity and introduces nicks in the DNA strand. Cleaves the DNA backbone by beta-delta elimination to generate a single-strand break at the site of the removed base with both 3'- and 5'-phosphates.</text>
</comment>
<comment type="catalytic activity">
    <reaction evidence="2">
        <text>Hydrolysis of DNA containing ring-opened 7-methylguanine residues, releasing 2,6-diamino-4-hydroxy-5-(N-methyl)formamidopyrimidine.</text>
        <dbReference type="EC" id="3.2.2.23"/>
    </reaction>
</comment>
<comment type="catalytic activity">
    <reaction evidence="2">
        <text>2'-deoxyribonucleotide-(2'-deoxyribose 5'-phosphate)-2'-deoxyribonucleotide-DNA = a 3'-end 2'-deoxyribonucleotide-(2,3-dehydro-2,3-deoxyribose 5'-phosphate)-DNA + a 5'-end 5'-phospho-2'-deoxyribonucleoside-DNA + H(+)</text>
        <dbReference type="Rhea" id="RHEA:66592"/>
        <dbReference type="Rhea" id="RHEA-COMP:13180"/>
        <dbReference type="Rhea" id="RHEA-COMP:16897"/>
        <dbReference type="Rhea" id="RHEA-COMP:17067"/>
        <dbReference type="ChEBI" id="CHEBI:15378"/>
        <dbReference type="ChEBI" id="CHEBI:136412"/>
        <dbReference type="ChEBI" id="CHEBI:157695"/>
        <dbReference type="ChEBI" id="CHEBI:167181"/>
        <dbReference type="EC" id="4.2.99.18"/>
    </reaction>
</comment>
<comment type="cofactor">
    <cofactor evidence="2">
        <name>Zn(2+)</name>
        <dbReference type="ChEBI" id="CHEBI:29105"/>
    </cofactor>
    <text evidence="2">Binds 1 zinc ion per subunit.</text>
</comment>
<comment type="subunit">
    <text evidence="2">Monomer.</text>
</comment>
<comment type="similarity">
    <text evidence="2">Belongs to the FPG family.</text>
</comment>
<organism>
    <name type="scientific">Escherichia coli O139:H28 (strain E24377A / ETEC)</name>
    <dbReference type="NCBI Taxonomy" id="331111"/>
    <lineage>
        <taxon>Bacteria</taxon>
        <taxon>Pseudomonadati</taxon>
        <taxon>Pseudomonadota</taxon>
        <taxon>Gammaproteobacteria</taxon>
        <taxon>Enterobacterales</taxon>
        <taxon>Enterobacteriaceae</taxon>
        <taxon>Escherichia</taxon>
    </lineage>
</organism>
<keyword id="KW-0227">DNA damage</keyword>
<keyword id="KW-0234">DNA repair</keyword>
<keyword id="KW-0238">DNA-binding</keyword>
<keyword id="KW-0326">Glycosidase</keyword>
<keyword id="KW-0378">Hydrolase</keyword>
<keyword id="KW-0456">Lyase</keyword>
<keyword id="KW-0479">Metal-binding</keyword>
<keyword id="KW-0511">Multifunctional enzyme</keyword>
<keyword id="KW-1185">Reference proteome</keyword>
<keyword id="KW-0862">Zinc</keyword>
<keyword id="KW-0863">Zinc-finger</keyword>
<sequence>MPELPEVETSRRGIEPHLVGATILHAVVRNGRLRWPVSEEIYRLSDQPVLSVQRRAKYLLLELPEGWIIIHLGMSGSLRILPEELPPEKHDHVDLVMSNGKVLRYTDPRRFGAWLWTKELEGHNVLAHLGPEPLSDDFNGEYLHQKCAKKKTAIKPWLMDNKLVVGVGNIYASESLFAAGIHPDRLASSLSLAECELLARVIKAVLLRSIEQGGTTLKDFLQSDGKPGYFAQELQVYGRKGEPCRVCGTPIVATKHAQRATFYCRQCQK</sequence>
<protein>
    <recommendedName>
        <fullName evidence="2">Formamidopyrimidine-DNA glycosylase</fullName>
        <shortName evidence="2">Fapy-DNA glycosylase</shortName>
        <ecNumber evidence="2">3.2.2.23</ecNumber>
    </recommendedName>
    <alternativeName>
        <fullName evidence="2">DNA-(apurinic or apyrimidinic site) lyase MutM</fullName>
        <shortName evidence="2">AP lyase MutM</shortName>
        <ecNumber evidence="2">4.2.99.18</ecNumber>
    </alternativeName>
</protein>
<proteinExistence type="inferred from homology"/>
<name>FPG_ECO24</name>
<reference key="1">
    <citation type="journal article" date="2008" name="J. Bacteriol.">
        <title>The pangenome structure of Escherichia coli: comparative genomic analysis of E. coli commensal and pathogenic isolates.</title>
        <authorList>
            <person name="Rasko D.A."/>
            <person name="Rosovitz M.J."/>
            <person name="Myers G.S.A."/>
            <person name="Mongodin E.F."/>
            <person name="Fricke W.F."/>
            <person name="Gajer P."/>
            <person name="Crabtree J."/>
            <person name="Sebaihia M."/>
            <person name="Thomson N.R."/>
            <person name="Chaudhuri R."/>
            <person name="Henderson I.R."/>
            <person name="Sperandio V."/>
            <person name="Ravel J."/>
        </authorList>
    </citation>
    <scope>NUCLEOTIDE SEQUENCE [LARGE SCALE GENOMIC DNA]</scope>
    <source>
        <strain>E24377A / ETEC</strain>
    </source>
</reference>
<accession>A7ZTI6</accession>
<feature type="initiator methionine" description="Removed" evidence="1">
    <location>
        <position position="1"/>
    </location>
</feature>
<feature type="chain" id="PRO_1000057691" description="Formamidopyrimidine-DNA glycosylase">
    <location>
        <begin position="2"/>
        <end position="269"/>
    </location>
</feature>
<feature type="zinc finger region" description="FPG-type" evidence="2">
    <location>
        <begin position="235"/>
        <end position="269"/>
    </location>
</feature>
<feature type="active site" description="Schiff-base intermediate with DNA" evidence="2">
    <location>
        <position position="2"/>
    </location>
</feature>
<feature type="active site" description="Proton donor" evidence="2">
    <location>
        <position position="3"/>
    </location>
</feature>
<feature type="active site" description="Proton donor; for beta-elimination activity" evidence="2">
    <location>
        <position position="57"/>
    </location>
</feature>
<feature type="active site" description="Proton donor; for delta-elimination activity" evidence="2">
    <location>
        <position position="259"/>
    </location>
</feature>
<feature type="binding site" evidence="2">
    <location>
        <position position="90"/>
    </location>
    <ligand>
        <name>DNA</name>
        <dbReference type="ChEBI" id="CHEBI:16991"/>
    </ligand>
</feature>
<feature type="binding site" evidence="2">
    <location>
        <position position="109"/>
    </location>
    <ligand>
        <name>DNA</name>
        <dbReference type="ChEBI" id="CHEBI:16991"/>
    </ligand>
</feature>
<feature type="binding site" evidence="2">
    <location>
        <position position="150"/>
    </location>
    <ligand>
        <name>DNA</name>
        <dbReference type="ChEBI" id="CHEBI:16991"/>
    </ligand>
</feature>
<gene>
    <name evidence="2" type="primary">mutM</name>
    <name evidence="2" type="synonym">fpg</name>
    <name type="ordered locus">EcE24377A_4136</name>
</gene>